<protein>
    <recommendedName>
        <fullName evidence="1">Fructose-1,6-bisphosphatase class 1</fullName>
        <shortName evidence="1">FBPase class 1</shortName>
        <ecNumber evidence="1">3.1.3.11</ecNumber>
    </recommendedName>
    <alternativeName>
        <fullName evidence="1">D-fructose-1,6-bisphosphate 1-phosphohydrolase class 1</fullName>
    </alternativeName>
</protein>
<evidence type="ECO:0000255" key="1">
    <source>
        <dbReference type="HAMAP-Rule" id="MF_01855"/>
    </source>
</evidence>
<keyword id="KW-0119">Carbohydrate metabolism</keyword>
<keyword id="KW-0963">Cytoplasm</keyword>
<keyword id="KW-0378">Hydrolase</keyword>
<keyword id="KW-0460">Magnesium</keyword>
<keyword id="KW-0479">Metal-binding</keyword>
<organism>
    <name type="scientific">Pseudomonas aeruginosa (strain LESB58)</name>
    <dbReference type="NCBI Taxonomy" id="557722"/>
    <lineage>
        <taxon>Bacteria</taxon>
        <taxon>Pseudomonadati</taxon>
        <taxon>Pseudomonadota</taxon>
        <taxon>Gammaproteobacteria</taxon>
        <taxon>Pseudomonadales</taxon>
        <taxon>Pseudomonadaceae</taxon>
        <taxon>Pseudomonas</taxon>
    </lineage>
</organism>
<reference key="1">
    <citation type="journal article" date="2009" name="Genome Res.">
        <title>Newly introduced genomic prophage islands are critical determinants of in vivo competitiveness in the Liverpool epidemic strain of Pseudomonas aeruginosa.</title>
        <authorList>
            <person name="Winstanley C."/>
            <person name="Langille M.G.I."/>
            <person name="Fothergill J.L."/>
            <person name="Kukavica-Ibrulj I."/>
            <person name="Paradis-Bleau C."/>
            <person name="Sanschagrin F."/>
            <person name="Thomson N.R."/>
            <person name="Winsor G.L."/>
            <person name="Quail M.A."/>
            <person name="Lennard N."/>
            <person name="Bignell A."/>
            <person name="Clarke L."/>
            <person name="Seeger K."/>
            <person name="Saunders D."/>
            <person name="Harris D."/>
            <person name="Parkhill J."/>
            <person name="Hancock R.E.W."/>
            <person name="Brinkman F.S.L."/>
            <person name="Levesque R.C."/>
        </authorList>
    </citation>
    <scope>NUCLEOTIDE SEQUENCE [LARGE SCALE GENOMIC DNA]</scope>
    <source>
        <strain>LESB58</strain>
    </source>
</reference>
<proteinExistence type="inferred from homology"/>
<gene>
    <name evidence="1" type="primary">fbp</name>
    <name type="ordered locus">PLES_55001</name>
</gene>
<feature type="chain" id="PRO_1000188685" description="Fructose-1,6-bisphosphatase class 1">
    <location>
        <begin position="1"/>
        <end position="336"/>
    </location>
</feature>
<feature type="binding site" evidence="1">
    <location>
        <position position="90"/>
    </location>
    <ligand>
        <name>Mg(2+)</name>
        <dbReference type="ChEBI" id="CHEBI:18420"/>
        <label>1</label>
    </ligand>
</feature>
<feature type="binding site" evidence="1">
    <location>
        <position position="112"/>
    </location>
    <ligand>
        <name>Mg(2+)</name>
        <dbReference type="ChEBI" id="CHEBI:18420"/>
        <label>1</label>
    </ligand>
</feature>
<feature type="binding site" evidence="1">
    <location>
        <position position="112"/>
    </location>
    <ligand>
        <name>Mg(2+)</name>
        <dbReference type="ChEBI" id="CHEBI:18420"/>
        <label>2</label>
    </ligand>
</feature>
<feature type="binding site" evidence="1">
    <location>
        <position position="114"/>
    </location>
    <ligand>
        <name>Mg(2+)</name>
        <dbReference type="ChEBI" id="CHEBI:18420"/>
        <label>1</label>
    </ligand>
</feature>
<feature type="binding site" evidence="1">
    <location>
        <begin position="115"/>
        <end position="118"/>
    </location>
    <ligand>
        <name>substrate</name>
    </ligand>
</feature>
<feature type="binding site" evidence="1">
    <location>
        <position position="115"/>
    </location>
    <ligand>
        <name>Mg(2+)</name>
        <dbReference type="ChEBI" id="CHEBI:18420"/>
        <label>2</label>
    </ligand>
</feature>
<feature type="binding site" evidence="1">
    <location>
        <position position="211"/>
    </location>
    <ligand>
        <name>substrate</name>
    </ligand>
</feature>
<feature type="binding site" evidence="1">
    <location>
        <position position="277"/>
    </location>
    <ligand>
        <name>substrate</name>
    </ligand>
</feature>
<feature type="binding site" evidence="1">
    <location>
        <position position="283"/>
    </location>
    <ligand>
        <name>Mg(2+)</name>
        <dbReference type="ChEBI" id="CHEBI:18420"/>
        <label>2</label>
    </ligand>
</feature>
<sequence length="336" mass="37216">MSRVTLSRYLIEQTRSHNTPADLRFLIEVVARACKEISHAVSKGALGGVLGSMGTENVQGEVQKKLDVMSNEILLEANEWAGNLAGMASEEMDHPYQIPGRYPKGAYLLVFDPLDGSSNIDVNVSVGTIFSVLRCPNEYLNQNDTLREEAFLQPGTTQVAAGYAIYGPQTMLMLTLGNGVKGFTLDRELGSFVLTHDNISVPESTAEFAINMSNQRHWEAPVKRYVEELLAGKEGPLGKNYNMRWIASMVADVHRILTRGGVFMYPRDAREPEKPGKLRLMYEANPMSFIIEQAGGAATNGTQRILDIKPENLHQRVAVFLGSKQEVERITGYHAE</sequence>
<accession>B7V3K3</accession>
<name>F16PA_PSEA8</name>
<dbReference type="EC" id="3.1.3.11" evidence="1"/>
<dbReference type="EMBL" id="FM209186">
    <property type="protein sequence ID" value="CAW30254.1"/>
    <property type="molecule type" value="Genomic_DNA"/>
</dbReference>
<dbReference type="RefSeq" id="WP_003095990.1">
    <property type="nucleotide sequence ID" value="NC_011770.1"/>
</dbReference>
<dbReference type="SMR" id="B7V3K3"/>
<dbReference type="KEGG" id="pag:PLES_55001"/>
<dbReference type="HOGENOM" id="CLU_039977_0_0_6"/>
<dbReference type="UniPathway" id="UPA00138"/>
<dbReference type="GO" id="GO:0005829">
    <property type="term" value="C:cytosol"/>
    <property type="evidence" value="ECO:0007669"/>
    <property type="project" value="TreeGrafter"/>
</dbReference>
<dbReference type="GO" id="GO:0042132">
    <property type="term" value="F:fructose 1,6-bisphosphate 1-phosphatase activity"/>
    <property type="evidence" value="ECO:0007669"/>
    <property type="project" value="UniProtKB-UniRule"/>
</dbReference>
<dbReference type="GO" id="GO:0000287">
    <property type="term" value="F:magnesium ion binding"/>
    <property type="evidence" value="ECO:0007669"/>
    <property type="project" value="UniProtKB-UniRule"/>
</dbReference>
<dbReference type="GO" id="GO:0030388">
    <property type="term" value="P:fructose 1,6-bisphosphate metabolic process"/>
    <property type="evidence" value="ECO:0007669"/>
    <property type="project" value="TreeGrafter"/>
</dbReference>
<dbReference type="GO" id="GO:0006002">
    <property type="term" value="P:fructose 6-phosphate metabolic process"/>
    <property type="evidence" value="ECO:0007669"/>
    <property type="project" value="TreeGrafter"/>
</dbReference>
<dbReference type="GO" id="GO:0006000">
    <property type="term" value="P:fructose metabolic process"/>
    <property type="evidence" value="ECO:0007669"/>
    <property type="project" value="TreeGrafter"/>
</dbReference>
<dbReference type="GO" id="GO:0006094">
    <property type="term" value="P:gluconeogenesis"/>
    <property type="evidence" value="ECO:0007669"/>
    <property type="project" value="UniProtKB-UniRule"/>
</dbReference>
<dbReference type="GO" id="GO:0005986">
    <property type="term" value="P:sucrose biosynthetic process"/>
    <property type="evidence" value="ECO:0007669"/>
    <property type="project" value="TreeGrafter"/>
</dbReference>
<dbReference type="CDD" id="cd00354">
    <property type="entry name" value="FBPase"/>
    <property type="match status" value="1"/>
</dbReference>
<dbReference type="FunFam" id="3.30.540.10:FF:000006">
    <property type="entry name" value="Fructose-1,6-bisphosphatase class 1"/>
    <property type="match status" value="1"/>
</dbReference>
<dbReference type="FunFam" id="3.40.190.80:FF:000011">
    <property type="entry name" value="Fructose-1,6-bisphosphatase class 1"/>
    <property type="match status" value="1"/>
</dbReference>
<dbReference type="Gene3D" id="3.40.190.80">
    <property type="match status" value="1"/>
</dbReference>
<dbReference type="Gene3D" id="3.30.540.10">
    <property type="entry name" value="Fructose-1,6-Bisphosphatase, subunit A, domain 1"/>
    <property type="match status" value="1"/>
</dbReference>
<dbReference type="HAMAP" id="MF_01855">
    <property type="entry name" value="FBPase_class1"/>
    <property type="match status" value="1"/>
</dbReference>
<dbReference type="InterPro" id="IPR044015">
    <property type="entry name" value="FBPase_C_dom"/>
</dbReference>
<dbReference type="InterPro" id="IPR000146">
    <property type="entry name" value="FBPase_class-1"/>
</dbReference>
<dbReference type="InterPro" id="IPR033391">
    <property type="entry name" value="FBPase_N"/>
</dbReference>
<dbReference type="InterPro" id="IPR028343">
    <property type="entry name" value="FBPtase"/>
</dbReference>
<dbReference type="NCBIfam" id="NF006778">
    <property type="entry name" value="PRK09293.1-1"/>
    <property type="match status" value="1"/>
</dbReference>
<dbReference type="NCBIfam" id="NF006779">
    <property type="entry name" value="PRK09293.1-3"/>
    <property type="match status" value="1"/>
</dbReference>
<dbReference type="NCBIfam" id="NF006780">
    <property type="entry name" value="PRK09293.1-4"/>
    <property type="match status" value="1"/>
</dbReference>
<dbReference type="PANTHER" id="PTHR11556">
    <property type="entry name" value="FRUCTOSE-1,6-BISPHOSPHATASE-RELATED"/>
    <property type="match status" value="1"/>
</dbReference>
<dbReference type="PANTHER" id="PTHR11556:SF35">
    <property type="entry name" value="SEDOHEPTULOSE-1,7-BISPHOSPHATASE, CHLOROPLASTIC"/>
    <property type="match status" value="1"/>
</dbReference>
<dbReference type="Pfam" id="PF00316">
    <property type="entry name" value="FBPase"/>
    <property type="match status" value="1"/>
</dbReference>
<dbReference type="Pfam" id="PF18913">
    <property type="entry name" value="FBPase_C"/>
    <property type="match status" value="1"/>
</dbReference>
<dbReference type="PIRSF" id="PIRSF500210">
    <property type="entry name" value="FBPtase"/>
    <property type="match status" value="1"/>
</dbReference>
<dbReference type="PIRSF" id="PIRSF000904">
    <property type="entry name" value="FBPtase_SBPase"/>
    <property type="match status" value="1"/>
</dbReference>
<dbReference type="PRINTS" id="PR00115">
    <property type="entry name" value="F16BPHPHTASE"/>
</dbReference>
<dbReference type="SUPFAM" id="SSF56655">
    <property type="entry name" value="Carbohydrate phosphatase"/>
    <property type="match status" value="1"/>
</dbReference>
<comment type="catalytic activity">
    <reaction evidence="1">
        <text>beta-D-fructose 1,6-bisphosphate + H2O = beta-D-fructose 6-phosphate + phosphate</text>
        <dbReference type="Rhea" id="RHEA:11064"/>
        <dbReference type="ChEBI" id="CHEBI:15377"/>
        <dbReference type="ChEBI" id="CHEBI:32966"/>
        <dbReference type="ChEBI" id="CHEBI:43474"/>
        <dbReference type="ChEBI" id="CHEBI:57634"/>
        <dbReference type="EC" id="3.1.3.11"/>
    </reaction>
</comment>
<comment type="cofactor">
    <cofactor evidence="1">
        <name>Mg(2+)</name>
        <dbReference type="ChEBI" id="CHEBI:18420"/>
    </cofactor>
    <text evidence="1">Binds 2 magnesium ions per subunit.</text>
</comment>
<comment type="pathway">
    <text evidence="1">Carbohydrate biosynthesis; gluconeogenesis.</text>
</comment>
<comment type="subunit">
    <text evidence="1">Homotetramer.</text>
</comment>
<comment type="subcellular location">
    <subcellularLocation>
        <location evidence="1">Cytoplasm</location>
    </subcellularLocation>
</comment>
<comment type="similarity">
    <text evidence="1">Belongs to the FBPase class 1 family.</text>
</comment>